<name>HOOK_AEDAE</name>
<organism>
    <name type="scientific">Aedes aegypti</name>
    <name type="common">Yellowfever mosquito</name>
    <name type="synonym">Culex aegypti</name>
    <dbReference type="NCBI Taxonomy" id="7159"/>
    <lineage>
        <taxon>Eukaryota</taxon>
        <taxon>Metazoa</taxon>
        <taxon>Ecdysozoa</taxon>
        <taxon>Arthropoda</taxon>
        <taxon>Hexapoda</taxon>
        <taxon>Insecta</taxon>
        <taxon>Pterygota</taxon>
        <taxon>Neoptera</taxon>
        <taxon>Endopterygota</taxon>
        <taxon>Diptera</taxon>
        <taxon>Nematocera</taxon>
        <taxon>Culicoidea</taxon>
        <taxon>Culicidae</taxon>
        <taxon>Culicinae</taxon>
        <taxon>Aedini</taxon>
        <taxon>Aedes</taxon>
        <taxon>Stegomyia</taxon>
    </lineage>
</organism>
<reference key="1">
    <citation type="journal article" date="2007" name="Science">
        <title>Genome sequence of Aedes aegypti, a major arbovirus vector.</title>
        <authorList>
            <person name="Nene V."/>
            <person name="Wortman J.R."/>
            <person name="Lawson D."/>
            <person name="Haas B.J."/>
            <person name="Kodira C.D."/>
            <person name="Tu Z.J."/>
            <person name="Loftus B.J."/>
            <person name="Xi Z."/>
            <person name="Megy K."/>
            <person name="Grabherr M."/>
            <person name="Ren Q."/>
            <person name="Zdobnov E.M."/>
            <person name="Lobo N.F."/>
            <person name="Campbell K.S."/>
            <person name="Brown S.E."/>
            <person name="Bonaldo M.F."/>
            <person name="Zhu J."/>
            <person name="Sinkins S.P."/>
            <person name="Hogenkamp D.G."/>
            <person name="Amedeo P."/>
            <person name="Arensburger P."/>
            <person name="Atkinson P.W."/>
            <person name="Bidwell S.L."/>
            <person name="Biedler J."/>
            <person name="Birney E."/>
            <person name="Bruggner R.V."/>
            <person name="Costas J."/>
            <person name="Coy M.R."/>
            <person name="Crabtree J."/>
            <person name="Crawford M."/>
            <person name="DeBruyn B."/>
            <person name="DeCaprio D."/>
            <person name="Eiglmeier K."/>
            <person name="Eisenstadt E."/>
            <person name="El-Dorry H."/>
            <person name="Gelbart W.M."/>
            <person name="Gomes S.L."/>
            <person name="Hammond M."/>
            <person name="Hannick L.I."/>
            <person name="Hogan J.R."/>
            <person name="Holmes M.H."/>
            <person name="Jaffe D."/>
            <person name="Johnston S.J."/>
            <person name="Kennedy R.C."/>
            <person name="Koo H."/>
            <person name="Kravitz S."/>
            <person name="Kriventseva E.V."/>
            <person name="Kulp D."/>
            <person name="Labutti K."/>
            <person name="Lee E."/>
            <person name="Li S."/>
            <person name="Lovin D.D."/>
            <person name="Mao C."/>
            <person name="Mauceli E."/>
            <person name="Menck C.F."/>
            <person name="Miller J.R."/>
            <person name="Montgomery P."/>
            <person name="Mori A."/>
            <person name="Nascimento A.L."/>
            <person name="Naveira H.F."/>
            <person name="Nusbaum C."/>
            <person name="O'Leary S.B."/>
            <person name="Orvis J."/>
            <person name="Pertea M."/>
            <person name="Quesneville H."/>
            <person name="Reidenbach K.R."/>
            <person name="Rogers Y.-H.C."/>
            <person name="Roth C.W."/>
            <person name="Schneider J.R."/>
            <person name="Schatz M."/>
            <person name="Shumway M."/>
            <person name="Stanke M."/>
            <person name="Stinson E.O."/>
            <person name="Tubio J.M.C."/>
            <person name="Vanzee J.P."/>
            <person name="Verjovski-Almeida S."/>
            <person name="Werner D."/>
            <person name="White O.R."/>
            <person name="Wyder S."/>
            <person name="Zeng Q."/>
            <person name="Zhao Q."/>
            <person name="Zhao Y."/>
            <person name="Hill C.A."/>
            <person name="Raikhel A.S."/>
            <person name="Soares M.B."/>
            <person name="Knudson D.L."/>
            <person name="Lee N.H."/>
            <person name="Galagan J."/>
            <person name="Salzberg S.L."/>
            <person name="Paulsen I.T."/>
            <person name="Dimopoulos G."/>
            <person name="Collins F.H."/>
            <person name="Bruce B."/>
            <person name="Fraser-Liggett C.M."/>
            <person name="Severson D.W."/>
        </authorList>
    </citation>
    <scope>NUCLEOTIDE SEQUENCE [LARGE SCALE GENOMIC DNA]</scope>
    <source>
        <strain>LVPib12</strain>
    </source>
</reference>
<feature type="chain" id="PRO_0000379059" description="Protein hook">
    <location>
        <begin position="1"/>
        <end position="685"/>
    </location>
</feature>
<feature type="domain" description="Calponin-homology (CH)" evidence="3">
    <location>
        <begin position="6"/>
        <end position="122"/>
    </location>
</feature>
<feature type="region of interest" description="Disordered" evidence="4">
    <location>
        <begin position="430"/>
        <end position="449"/>
    </location>
</feature>
<feature type="region of interest" description="Disordered" evidence="4">
    <location>
        <begin position="593"/>
        <end position="625"/>
    </location>
</feature>
<feature type="region of interest" description="Disordered" evidence="4">
    <location>
        <begin position="661"/>
        <end position="685"/>
    </location>
</feature>
<feature type="coiled-coil region" evidence="2">
    <location>
        <begin position="134"/>
        <end position="570"/>
    </location>
</feature>
<feature type="compositionally biased region" description="Low complexity" evidence="4">
    <location>
        <begin position="602"/>
        <end position="623"/>
    </location>
</feature>
<feature type="compositionally biased region" description="Polar residues" evidence="4">
    <location>
        <begin position="661"/>
        <end position="670"/>
    </location>
</feature>
<sequence length="685" mass="77356">MESDKMEIYESLIRWLGVLQLSAPHENIQQLSDGVALAQALNLIAPEMFSEGWLAKIKVDVGHNWRLKVSNLKKIIEGVYVYYQDILSLNLSEKLRPDAMKIAEKCDGYELGRLLQLILGCAVNCLEKQKYITQIMELEESLQRNIMAALQDIEYVWQGVSPSRNSINATSLDVKTLQEDRDSLAQKCHETNKKMLILIEEKSVLQQEITKLQALIARYENPNLIGDDGTSLGPVQLGSTRYNDLRKVVDSLKDELLQAETARDDLKMKSAMQEKEIADLQVKIDELHTATAEIAQLKDEIDILKEANDKLKMCETQLLTYKKKLEDYNDLKKQIKMLEECSAEYLKQNLQHEEEAKKYSGLKGQVELYKKEIQDLHAKLDSEMSKTVKTEFEYNQLQAKLSAVQREKENLLSERDVLRETCDELKCGQAAEDSESGNTMSKELHSSDVRDRIERLERENKVLREGQGGQTALSQLLDDANQRNEKLRDQLKAANQRVLLLSQHHNEDISSKSDMDIQLKQALELNEQRSSQIDEAQSQMTQLHTKIANLEAALAAKDQELLAADSRYKKCVEKAKEVIKTLDPRAINEALLLEKPSQDGEASSSSATGSGGDASTLTSTGSGRVPMGVQEEQLIATAFYRLGMTCQREAVDSRLALLSGPGQSFLSRQRQPAPRKPMNMPFAKK</sequence>
<gene>
    <name evidence="1" type="primary">hook</name>
    <name evidence="1" type="synonym">hk</name>
    <name type="ORF">AAEL005341</name>
</gene>
<accession>Q17AF4</accession>
<protein>
    <recommendedName>
        <fullName>Protein hook</fullName>
    </recommendedName>
</protein>
<proteinExistence type="inferred from homology"/>
<dbReference type="EMBL" id="CH477336">
    <property type="protein sequence ID" value="EAT43206.1"/>
    <property type="molecule type" value="Genomic_DNA"/>
</dbReference>
<dbReference type="SMR" id="Q17AF4"/>
<dbReference type="FunCoup" id="Q17AF4">
    <property type="interactions" value="500"/>
</dbReference>
<dbReference type="STRING" id="7159.Q17AF4"/>
<dbReference type="PaxDb" id="7159-AAEL005341-PA"/>
<dbReference type="EnsemblMetazoa" id="AAEL005341-RA">
    <property type="protein sequence ID" value="AAEL005341-PA"/>
    <property type="gene ID" value="AAEL005341"/>
</dbReference>
<dbReference type="GeneID" id="5566328"/>
<dbReference type="KEGG" id="aag:5566328"/>
<dbReference type="CTD" id="35169"/>
<dbReference type="VEuPathDB" id="VectorBase:AAEL005341"/>
<dbReference type="eggNOG" id="ENOG502QQM8">
    <property type="taxonomic scope" value="Eukaryota"/>
</dbReference>
<dbReference type="HOGENOM" id="CLU_011214_1_0_1"/>
<dbReference type="InParanoid" id="Q17AF4"/>
<dbReference type="OMA" id="DAKYRKC"/>
<dbReference type="OrthoDB" id="49395at2759"/>
<dbReference type="PhylomeDB" id="Q17AF4"/>
<dbReference type="Proteomes" id="UP000008820">
    <property type="component" value="Chromosome 2"/>
</dbReference>
<dbReference type="Proteomes" id="UP000682892">
    <property type="component" value="Chromosome 2"/>
</dbReference>
<dbReference type="GO" id="GO:0005813">
    <property type="term" value="C:centrosome"/>
    <property type="evidence" value="ECO:0007669"/>
    <property type="project" value="TreeGrafter"/>
</dbReference>
<dbReference type="GO" id="GO:0005768">
    <property type="term" value="C:endosome"/>
    <property type="evidence" value="ECO:0000250"/>
    <property type="project" value="UniProtKB"/>
</dbReference>
<dbReference type="GO" id="GO:0005874">
    <property type="term" value="C:microtubule"/>
    <property type="evidence" value="ECO:0007669"/>
    <property type="project" value="UniProtKB-KW"/>
</dbReference>
<dbReference type="GO" id="GO:0051959">
    <property type="term" value="F:dynein light intermediate chain binding"/>
    <property type="evidence" value="ECO:0007669"/>
    <property type="project" value="TreeGrafter"/>
</dbReference>
<dbReference type="GO" id="GO:0008017">
    <property type="term" value="F:microtubule binding"/>
    <property type="evidence" value="ECO:0000250"/>
    <property type="project" value="UniProtKB"/>
</dbReference>
<dbReference type="GO" id="GO:0031122">
    <property type="term" value="P:cytoplasmic microtubule organization"/>
    <property type="evidence" value="ECO:0007669"/>
    <property type="project" value="InterPro"/>
</dbReference>
<dbReference type="GO" id="GO:0030705">
    <property type="term" value="P:cytoskeleton-dependent intracellular transport"/>
    <property type="evidence" value="ECO:0000250"/>
    <property type="project" value="UniProtKB"/>
</dbReference>
<dbReference type="GO" id="GO:0006897">
    <property type="term" value="P:endocytosis"/>
    <property type="evidence" value="ECO:0000250"/>
    <property type="project" value="UniProtKB"/>
</dbReference>
<dbReference type="CDD" id="cd22222">
    <property type="entry name" value="HkD_Hook"/>
    <property type="match status" value="1"/>
</dbReference>
<dbReference type="FunFam" id="1.10.418.10:FF:000024">
    <property type="entry name" value="Hook homolog 3 (Drosophila)"/>
    <property type="match status" value="1"/>
</dbReference>
<dbReference type="Gene3D" id="1.20.5.340">
    <property type="match status" value="1"/>
</dbReference>
<dbReference type="Gene3D" id="1.10.418.10">
    <property type="entry name" value="Calponin-like domain"/>
    <property type="match status" value="1"/>
</dbReference>
<dbReference type="InterPro" id="IPR001715">
    <property type="entry name" value="CH_dom"/>
</dbReference>
<dbReference type="InterPro" id="IPR036872">
    <property type="entry name" value="CH_dom_sf"/>
</dbReference>
<dbReference type="InterPro" id="IPR008636">
    <property type="entry name" value="Hook_C"/>
</dbReference>
<dbReference type="InterPro" id="IPR043936">
    <property type="entry name" value="HOOK_N"/>
</dbReference>
<dbReference type="InterPro" id="IPR038077">
    <property type="entry name" value="Troponin_sf"/>
</dbReference>
<dbReference type="PANTHER" id="PTHR18947">
    <property type="entry name" value="HOOK PROTEINS"/>
    <property type="match status" value="1"/>
</dbReference>
<dbReference type="PANTHER" id="PTHR18947:SF39">
    <property type="entry name" value="PROTEIN HOOK"/>
    <property type="match status" value="1"/>
</dbReference>
<dbReference type="Pfam" id="PF05622">
    <property type="entry name" value="HOOK"/>
    <property type="match status" value="1"/>
</dbReference>
<dbReference type="Pfam" id="PF19047">
    <property type="entry name" value="HOOK_N"/>
    <property type="match status" value="1"/>
</dbReference>
<dbReference type="SUPFAM" id="SSF116907">
    <property type="entry name" value="Hook domain"/>
    <property type="match status" value="1"/>
</dbReference>
<dbReference type="SUPFAM" id="SSF90250">
    <property type="entry name" value="Troponin coil-coiled subunits"/>
    <property type="match status" value="1"/>
</dbReference>
<dbReference type="PROSITE" id="PS50021">
    <property type="entry name" value="CH"/>
    <property type="match status" value="1"/>
</dbReference>
<keyword id="KW-0175">Coiled coil</keyword>
<keyword id="KW-0963">Cytoplasm</keyword>
<keyword id="KW-0206">Cytoskeleton</keyword>
<keyword id="KW-0254">Endocytosis</keyword>
<keyword id="KW-0967">Endosome</keyword>
<keyword id="KW-0493">Microtubule</keyword>
<keyword id="KW-1185">Reference proteome</keyword>
<evidence type="ECO:0000250" key="1">
    <source>
        <dbReference type="UniProtKB" id="Q24185"/>
    </source>
</evidence>
<evidence type="ECO:0000255" key="2"/>
<evidence type="ECO:0000255" key="3">
    <source>
        <dbReference type="PROSITE-ProRule" id="PRU00044"/>
    </source>
</evidence>
<evidence type="ECO:0000256" key="4">
    <source>
        <dbReference type="SAM" id="MobiDB-lite"/>
    </source>
</evidence>
<evidence type="ECO:0000305" key="5"/>
<comment type="function">
    <text evidence="1">Involved in endocytic trafficking. Probably acts as a cytoskeletal linker protein that tethers endosome vesicles to the cytoskeleton.</text>
</comment>
<comment type="subunit">
    <text evidence="1">Homodimer. Interacts with microtubules via its N-terminus.</text>
</comment>
<comment type="subcellular location">
    <subcellularLocation>
        <location evidence="1">Cytoplasm</location>
        <location evidence="1">Cytoskeleton</location>
    </subcellularLocation>
    <subcellularLocation>
        <location evidence="1">Endosome</location>
    </subcellularLocation>
</comment>
<comment type="domain">
    <text evidence="1">The coiled coil domain mediates homodimerization.</text>
</comment>
<comment type="similarity">
    <text evidence="5">Belongs to the hook family.</text>
</comment>